<reference key="1">
    <citation type="journal article" date="2004" name="Genome Res.">
        <title>The status, quality, and expansion of the NIH full-length cDNA project: the Mammalian Gene Collection (MGC).</title>
        <authorList>
            <consortium name="The MGC Project Team"/>
        </authorList>
    </citation>
    <scope>NUCLEOTIDE SEQUENCE [LARGE SCALE MRNA]</scope>
    <source>
        <tissue>Thymus</tissue>
    </source>
</reference>
<sequence length="391" mass="44070">MEPLRVLELYSGIGGMHHALRESRVPAHVVAAIDVSTVANEVYKHNFPHTHLLAKTIEGISLEEFDKLSFNMILMSPPCQPFTRIGLQGDMSDRRTNSFLYILDILPRLQKLPKYILLENVKGFEVSSTRGLLIQTMEACGFQYQEFLLSPSSLGIPNSRLRYFLIAKLQSEPLCFQAPGQILMEFPNSGTVQPQEYAVVEEGKLRVRTREPDVCLDSSSTQCSGQDSILFKHETAADIDRKRQQDSDLSVQMLKGFLEDGDTAQYLLPAKSLLRYALLLDIVKPTSRRSMCFTKGYGSYIEGTGSVLQTAEDVQIENIYKSLPDLPPEEKIAKLSMLKLRYFTPKEIANLLGFPPEFGFPEKTTVKQRYRLLGNSLNVHVVSKLLTVLCE</sequence>
<keyword id="KW-0963">Cytoplasm</keyword>
<keyword id="KW-0489">Methyltransferase</keyword>
<keyword id="KW-1185">Reference proteome</keyword>
<keyword id="KW-0694">RNA-binding</keyword>
<keyword id="KW-0949">S-adenosyl-L-methionine</keyword>
<keyword id="KW-0808">Transferase</keyword>
<keyword id="KW-0819">tRNA processing</keyword>
<feature type="chain" id="PRO_0000249870" description="tRNA (cytosine(38)-C(5))-methyltransferase">
    <location>
        <begin position="1"/>
        <end position="391"/>
    </location>
</feature>
<feature type="domain" description="SAM-dependent MTase C5-type" evidence="2">
    <location>
        <begin position="4"/>
        <end position="391"/>
    </location>
</feature>
<feature type="active site" evidence="2">
    <location>
        <position position="79"/>
    </location>
</feature>
<feature type="binding site" evidence="1">
    <location>
        <begin position="13"/>
        <end position="15"/>
    </location>
    <ligand>
        <name>S-adenosyl-L-methionine</name>
        <dbReference type="ChEBI" id="CHEBI:59789"/>
    </ligand>
</feature>
<feature type="binding site" evidence="1">
    <location>
        <position position="34"/>
    </location>
    <ligand>
        <name>S-adenosyl-L-methionine</name>
        <dbReference type="ChEBI" id="CHEBI:59789"/>
    </ligand>
</feature>
<feature type="binding site" evidence="1">
    <location>
        <begin position="57"/>
        <end position="58"/>
    </location>
    <ligand>
        <name>S-adenosyl-L-methionine</name>
        <dbReference type="ChEBI" id="CHEBI:59789"/>
    </ligand>
</feature>
<feature type="binding site" evidence="1">
    <location>
        <position position="76"/>
    </location>
    <ligand>
        <name>S-adenosyl-L-methionine</name>
        <dbReference type="ChEBI" id="CHEBI:59789"/>
    </ligand>
</feature>
<feature type="binding site" evidence="1">
    <location>
        <position position="376"/>
    </location>
    <ligand>
        <name>S-adenosyl-L-methionine</name>
        <dbReference type="ChEBI" id="CHEBI:59789"/>
    </ligand>
</feature>
<name>TRDMT_RAT</name>
<accession>Q4G073</accession>
<dbReference type="EC" id="2.1.1.204" evidence="1"/>
<dbReference type="EMBL" id="BC098700">
    <property type="protein sequence ID" value="AAH98700.1"/>
    <property type="molecule type" value="mRNA"/>
</dbReference>
<dbReference type="RefSeq" id="NP_001026813.1">
    <property type="nucleotide sequence ID" value="NM_001031643.1"/>
</dbReference>
<dbReference type="SMR" id="Q4G073"/>
<dbReference type="FunCoup" id="Q4G073">
    <property type="interactions" value="1359"/>
</dbReference>
<dbReference type="STRING" id="10116.ENSRNOP00000038279"/>
<dbReference type="PhosphoSitePlus" id="Q4G073"/>
<dbReference type="PaxDb" id="10116-ENSRNOP00000038279"/>
<dbReference type="Ensembl" id="ENSRNOT00000038651.6">
    <property type="protein sequence ID" value="ENSRNOP00000038279.4"/>
    <property type="gene ID" value="ENSRNOG00000026132.6"/>
</dbReference>
<dbReference type="GeneID" id="291324"/>
<dbReference type="KEGG" id="rno:291324"/>
<dbReference type="UCSC" id="RGD:1306292">
    <property type="organism name" value="rat"/>
</dbReference>
<dbReference type="AGR" id="RGD:1306292"/>
<dbReference type="CTD" id="1787"/>
<dbReference type="RGD" id="1306292">
    <property type="gene designation" value="Trdmt1"/>
</dbReference>
<dbReference type="eggNOG" id="KOG0919">
    <property type="taxonomic scope" value="Eukaryota"/>
</dbReference>
<dbReference type="GeneTree" id="ENSGT00390000016416"/>
<dbReference type="HOGENOM" id="CLU_049101_0_0_1"/>
<dbReference type="InParanoid" id="Q4G073"/>
<dbReference type="OMA" id="HYAFKYA"/>
<dbReference type="PhylomeDB" id="Q4G073"/>
<dbReference type="TreeFam" id="TF300024"/>
<dbReference type="PRO" id="PR:Q4G073"/>
<dbReference type="Proteomes" id="UP000002494">
    <property type="component" value="Chromosome 17"/>
</dbReference>
<dbReference type="Bgee" id="ENSRNOG00000026132">
    <property type="expression patterns" value="Expressed in thymus and 19 other cell types or tissues"/>
</dbReference>
<dbReference type="GO" id="GO:0005737">
    <property type="term" value="C:cytoplasm"/>
    <property type="evidence" value="ECO:0000266"/>
    <property type="project" value="RGD"/>
</dbReference>
<dbReference type="GO" id="GO:0005634">
    <property type="term" value="C:nucleus"/>
    <property type="evidence" value="ECO:0000318"/>
    <property type="project" value="GO_Central"/>
</dbReference>
<dbReference type="GO" id="GO:0003723">
    <property type="term" value="F:RNA binding"/>
    <property type="evidence" value="ECO:0007669"/>
    <property type="project" value="UniProtKB-KW"/>
</dbReference>
<dbReference type="GO" id="GO:0016428">
    <property type="term" value="F:tRNA (cytidine-5-)-methyltransferase activity"/>
    <property type="evidence" value="ECO:0000250"/>
    <property type="project" value="UniProtKB"/>
</dbReference>
<dbReference type="GO" id="GO:0008175">
    <property type="term" value="F:tRNA methyltransferase activity"/>
    <property type="evidence" value="ECO:0000266"/>
    <property type="project" value="RGD"/>
</dbReference>
<dbReference type="GO" id="GO:0001975">
    <property type="term" value="P:response to amphetamine"/>
    <property type="evidence" value="ECO:0000270"/>
    <property type="project" value="RGD"/>
</dbReference>
<dbReference type="GO" id="GO:0030488">
    <property type="term" value="P:tRNA methylation"/>
    <property type="evidence" value="ECO:0000250"/>
    <property type="project" value="UniProtKB"/>
</dbReference>
<dbReference type="GO" id="GO:0006400">
    <property type="term" value="P:tRNA modification"/>
    <property type="evidence" value="ECO:0000266"/>
    <property type="project" value="RGD"/>
</dbReference>
<dbReference type="GO" id="GO:0036416">
    <property type="term" value="P:tRNA stabilization"/>
    <property type="evidence" value="ECO:0000250"/>
    <property type="project" value="UniProtKB"/>
</dbReference>
<dbReference type="CDD" id="cd00315">
    <property type="entry name" value="Cyt_C5_DNA_methylase"/>
    <property type="match status" value="1"/>
</dbReference>
<dbReference type="FunFam" id="3.40.50.150:FF:000285">
    <property type="entry name" value="tRNA (cytosine(38)-C(5))-methyltransferase"/>
    <property type="match status" value="1"/>
</dbReference>
<dbReference type="FunFam" id="3.90.120.10:FF:000005">
    <property type="entry name" value="tRNA (Cytosine(38)-C(5))-methyltransferase isoform X1"/>
    <property type="match status" value="1"/>
</dbReference>
<dbReference type="Gene3D" id="3.90.120.10">
    <property type="entry name" value="DNA Methylase, subunit A, domain 2"/>
    <property type="match status" value="1"/>
</dbReference>
<dbReference type="Gene3D" id="3.40.50.150">
    <property type="entry name" value="Vaccinia Virus protein VP39"/>
    <property type="match status" value="1"/>
</dbReference>
<dbReference type="InterPro" id="IPR050750">
    <property type="entry name" value="C5-MTase"/>
</dbReference>
<dbReference type="InterPro" id="IPR001525">
    <property type="entry name" value="C5_MeTfrase"/>
</dbReference>
<dbReference type="InterPro" id="IPR031303">
    <property type="entry name" value="C5_meth_CS"/>
</dbReference>
<dbReference type="InterPro" id="IPR029063">
    <property type="entry name" value="SAM-dependent_MTases_sf"/>
</dbReference>
<dbReference type="NCBIfam" id="TIGR00675">
    <property type="entry name" value="dcm"/>
    <property type="match status" value="1"/>
</dbReference>
<dbReference type="PANTHER" id="PTHR46098">
    <property type="entry name" value="TRNA (CYTOSINE(38)-C(5))-METHYLTRANSFERASE"/>
    <property type="match status" value="1"/>
</dbReference>
<dbReference type="PANTHER" id="PTHR46098:SF1">
    <property type="entry name" value="TRNA (CYTOSINE(38)-C(5))-METHYLTRANSFERASE"/>
    <property type="match status" value="1"/>
</dbReference>
<dbReference type="Pfam" id="PF00145">
    <property type="entry name" value="DNA_methylase"/>
    <property type="match status" value="1"/>
</dbReference>
<dbReference type="PRINTS" id="PR00105">
    <property type="entry name" value="C5METTRFRASE"/>
</dbReference>
<dbReference type="SUPFAM" id="SSF53335">
    <property type="entry name" value="S-adenosyl-L-methionine-dependent methyltransferases"/>
    <property type="match status" value="1"/>
</dbReference>
<dbReference type="PROSITE" id="PS00095">
    <property type="entry name" value="C5_MTASE_2"/>
    <property type="match status" value="1"/>
</dbReference>
<dbReference type="PROSITE" id="PS51679">
    <property type="entry name" value="SAM_MT_C5"/>
    <property type="match status" value="1"/>
</dbReference>
<organism>
    <name type="scientific">Rattus norvegicus</name>
    <name type="common">Rat</name>
    <dbReference type="NCBI Taxonomy" id="10116"/>
    <lineage>
        <taxon>Eukaryota</taxon>
        <taxon>Metazoa</taxon>
        <taxon>Chordata</taxon>
        <taxon>Craniata</taxon>
        <taxon>Vertebrata</taxon>
        <taxon>Euteleostomi</taxon>
        <taxon>Mammalia</taxon>
        <taxon>Eutheria</taxon>
        <taxon>Euarchontoglires</taxon>
        <taxon>Glires</taxon>
        <taxon>Rodentia</taxon>
        <taxon>Myomorpha</taxon>
        <taxon>Muroidea</taxon>
        <taxon>Muridae</taxon>
        <taxon>Murinae</taxon>
        <taxon>Rattus</taxon>
    </lineage>
</organism>
<protein>
    <recommendedName>
        <fullName>tRNA (cytosine(38)-C(5))-methyltransferase</fullName>
        <ecNumber evidence="1">2.1.1.204</ecNumber>
    </recommendedName>
    <alternativeName>
        <fullName>DNA (cytosine-5)-methyltransferase-like protein 2</fullName>
        <shortName>Dnmt2</shortName>
    </alternativeName>
</protein>
<comment type="function">
    <text evidence="1">Specifically methylates cytosine 38 in the anticodon loop of tRNA(Asp). Has higher activity on tRNA(Asp) modified with queuosine at position 34.</text>
</comment>
<comment type="catalytic activity">
    <reaction evidence="1">
        <text>cytidine(38) in tRNA + S-adenosyl-L-methionine = 5-methylcytidine(38) in tRNA + S-adenosyl-L-homocysteine + H(+)</text>
        <dbReference type="Rhea" id="RHEA:42956"/>
        <dbReference type="Rhea" id="RHEA-COMP:10299"/>
        <dbReference type="Rhea" id="RHEA-COMP:10300"/>
        <dbReference type="ChEBI" id="CHEBI:15378"/>
        <dbReference type="ChEBI" id="CHEBI:57856"/>
        <dbReference type="ChEBI" id="CHEBI:59789"/>
        <dbReference type="ChEBI" id="CHEBI:74483"/>
        <dbReference type="ChEBI" id="CHEBI:82748"/>
        <dbReference type="EC" id="2.1.1.204"/>
    </reaction>
    <physiologicalReaction direction="left-to-right" evidence="1">
        <dbReference type="Rhea" id="RHEA:42957"/>
    </physiologicalReaction>
</comment>
<comment type="subcellular location">
    <subcellularLocation>
        <location evidence="1">Cytoplasm</location>
    </subcellularLocation>
</comment>
<comment type="similarity">
    <text evidence="2">Belongs to the class I-like SAM-binding methyltransferase superfamily. C5-methyltransferase family.</text>
</comment>
<gene>
    <name type="primary">Trdmt1</name>
    <name type="synonym">Dnmt2</name>
</gene>
<proteinExistence type="evidence at transcript level"/>
<evidence type="ECO:0000250" key="1">
    <source>
        <dbReference type="UniProtKB" id="O14717"/>
    </source>
</evidence>
<evidence type="ECO:0000255" key="2">
    <source>
        <dbReference type="PROSITE-ProRule" id="PRU01016"/>
    </source>
</evidence>